<accession>Q6HAX5</accession>
<dbReference type="EMBL" id="AE017355">
    <property type="protein sequence ID" value="AAT63853.1"/>
    <property type="molecule type" value="Genomic_DNA"/>
</dbReference>
<dbReference type="RefSeq" id="WP_001142616.1">
    <property type="nucleotide sequence ID" value="NC_005957.1"/>
</dbReference>
<dbReference type="RefSeq" id="YP_039301.1">
    <property type="nucleotide sequence ID" value="NC_005957.1"/>
</dbReference>
<dbReference type="SMR" id="Q6HAX5"/>
<dbReference type="GeneID" id="45025139"/>
<dbReference type="KEGG" id="btk:BT9727_4992"/>
<dbReference type="PATRIC" id="fig|281309.8.peg.5309"/>
<dbReference type="HOGENOM" id="CLU_079215_4_2_9"/>
<dbReference type="Proteomes" id="UP000001301">
    <property type="component" value="Chromosome"/>
</dbReference>
<dbReference type="GO" id="GO:0005886">
    <property type="term" value="C:plasma membrane"/>
    <property type="evidence" value="ECO:0007669"/>
    <property type="project" value="UniProtKB-SubCell"/>
</dbReference>
<dbReference type="GO" id="GO:0045259">
    <property type="term" value="C:proton-transporting ATP synthase complex"/>
    <property type="evidence" value="ECO:0007669"/>
    <property type="project" value="UniProtKB-KW"/>
</dbReference>
<dbReference type="GO" id="GO:0046933">
    <property type="term" value="F:proton-transporting ATP synthase activity, rotational mechanism"/>
    <property type="evidence" value="ECO:0007669"/>
    <property type="project" value="UniProtKB-UniRule"/>
</dbReference>
<dbReference type="GO" id="GO:0046961">
    <property type="term" value="F:proton-transporting ATPase activity, rotational mechanism"/>
    <property type="evidence" value="ECO:0007669"/>
    <property type="project" value="TreeGrafter"/>
</dbReference>
<dbReference type="CDD" id="cd06503">
    <property type="entry name" value="ATP-synt_Fo_b"/>
    <property type="match status" value="1"/>
</dbReference>
<dbReference type="Gene3D" id="6.10.250.1580">
    <property type="match status" value="1"/>
</dbReference>
<dbReference type="HAMAP" id="MF_01398">
    <property type="entry name" value="ATP_synth_b_bprime"/>
    <property type="match status" value="1"/>
</dbReference>
<dbReference type="InterPro" id="IPR028987">
    <property type="entry name" value="ATP_synth_B-like_membr_sf"/>
</dbReference>
<dbReference type="InterPro" id="IPR002146">
    <property type="entry name" value="ATP_synth_b/b'su_bac/chlpt"/>
</dbReference>
<dbReference type="InterPro" id="IPR005864">
    <property type="entry name" value="ATP_synth_F0_bsu_bac"/>
</dbReference>
<dbReference type="InterPro" id="IPR050059">
    <property type="entry name" value="ATP_synthase_B_chain"/>
</dbReference>
<dbReference type="NCBIfam" id="TIGR01144">
    <property type="entry name" value="ATP_synt_b"/>
    <property type="match status" value="1"/>
</dbReference>
<dbReference type="PANTHER" id="PTHR33445:SF1">
    <property type="entry name" value="ATP SYNTHASE SUBUNIT B"/>
    <property type="match status" value="1"/>
</dbReference>
<dbReference type="PANTHER" id="PTHR33445">
    <property type="entry name" value="ATP SYNTHASE SUBUNIT B', CHLOROPLASTIC"/>
    <property type="match status" value="1"/>
</dbReference>
<dbReference type="Pfam" id="PF00430">
    <property type="entry name" value="ATP-synt_B"/>
    <property type="match status" value="1"/>
</dbReference>
<dbReference type="SUPFAM" id="SSF81573">
    <property type="entry name" value="F1F0 ATP synthase subunit B, membrane domain"/>
    <property type="match status" value="1"/>
</dbReference>
<comment type="function">
    <text evidence="1">F(1)F(0) ATP synthase produces ATP from ADP in the presence of a proton or sodium gradient. F-type ATPases consist of two structural domains, F(1) containing the extramembraneous catalytic core and F(0) containing the membrane proton channel, linked together by a central stalk and a peripheral stalk. During catalysis, ATP synthesis in the catalytic domain of F(1) is coupled via a rotary mechanism of the central stalk subunits to proton translocation.</text>
</comment>
<comment type="function">
    <text evidence="1">Component of the F(0) channel, it forms part of the peripheral stalk, linking F(1) to F(0).</text>
</comment>
<comment type="subunit">
    <text evidence="1">F-type ATPases have 2 components, F(1) - the catalytic core - and F(0) - the membrane proton channel. F(1) has five subunits: alpha(3), beta(3), gamma(1), delta(1), epsilon(1). F(0) has three main subunits: a(1), b(2) and c(10-14). The alpha and beta chains form an alternating ring which encloses part of the gamma chain. F(1) is attached to F(0) by a central stalk formed by the gamma and epsilon chains, while a peripheral stalk is formed by the delta and b chains.</text>
</comment>
<comment type="subcellular location">
    <subcellularLocation>
        <location evidence="1">Cell membrane</location>
        <topology evidence="1">Single-pass membrane protein</topology>
    </subcellularLocation>
</comment>
<comment type="similarity">
    <text evidence="1">Belongs to the ATPase B chain family.</text>
</comment>
<organism>
    <name type="scientific">Bacillus thuringiensis subsp. konkukian (strain 97-27)</name>
    <dbReference type="NCBI Taxonomy" id="281309"/>
    <lineage>
        <taxon>Bacteria</taxon>
        <taxon>Bacillati</taxon>
        <taxon>Bacillota</taxon>
        <taxon>Bacilli</taxon>
        <taxon>Bacillales</taxon>
        <taxon>Bacillaceae</taxon>
        <taxon>Bacillus</taxon>
        <taxon>Bacillus cereus group</taxon>
    </lineage>
</organism>
<keyword id="KW-0066">ATP synthesis</keyword>
<keyword id="KW-1003">Cell membrane</keyword>
<keyword id="KW-0138">CF(0)</keyword>
<keyword id="KW-0375">Hydrogen ion transport</keyword>
<keyword id="KW-0406">Ion transport</keyword>
<keyword id="KW-0472">Membrane</keyword>
<keyword id="KW-0812">Transmembrane</keyword>
<keyword id="KW-1133">Transmembrane helix</keyword>
<keyword id="KW-0813">Transport</keyword>
<name>ATPF_BACHK</name>
<reference key="1">
    <citation type="journal article" date="2006" name="J. Bacteriol.">
        <title>Pathogenomic sequence analysis of Bacillus cereus and Bacillus thuringiensis isolates closely related to Bacillus anthracis.</title>
        <authorList>
            <person name="Han C.S."/>
            <person name="Xie G."/>
            <person name="Challacombe J.F."/>
            <person name="Altherr M.R."/>
            <person name="Bhotika S.S."/>
            <person name="Bruce D."/>
            <person name="Campbell C.S."/>
            <person name="Campbell M.L."/>
            <person name="Chen J."/>
            <person name="Chertkov O."/>
            <person name="Cleland C."/>
            <person name="Dimitrijevic M."/>
            <person name="Doggett N.A."/>
            <person name="Fawcett J.J."/>
            <person name="Glavina T."/>
            <person name="Goodwin L.A."/>
            <person name="Hill K.K."/>
            <person name="Hitchcock P."/>
            <person name="Jackson P.J."/>
            <person name="Keim P."/>
            <person name="Kewalramani A.R."/>
            <person name="Longmire J."/>
            <person name="Lucas S."/>
            <person name="Malfatti S."/>
            <person name="McMurry K."/>
            <person name="Meincke L.J."/>
            <person name="Misra M."/>
            <person name="Moseman B.L."/>
            <person name="Mundt M."/>
            <person name="Munk A.C."/>
            <person name="Okinaka R.T."/>
            <person name="Parson-Quintana B."/>
            <person name="Reilly L.P."/>
            <person name="Richardson P."/>
            <person name="Robinson D.L."/>
            <person name="Rubin E."/>
            <person name="Saunders E."/>
            <person name="Tapia R."/>
            <person name="Tesmer J.G."/>
            <person name="Thayer N."/>
            <person name="Thompson L.S."/>
            <person name="Tice H."/>
            <person name="Ticknor L.O."/>
            <person name="Wills P.L."/>
            <person name="Brettin T.S."/>
            <person name="Gilna P."/>
        </authorList>
    </citation>
    <scope>NUCLEOTIDE SEQUENCE [LARGE SCALE GENOMIC DNA]</scope>
    <source>
        <strain>97-27</strain>
    </source>
</reference>
<feature type="chain" id="PRO_0000368335" description="ATP synthase subunit b">
    <location>
        <begin position="1"/>
        <end position="168"/>
    </location>
</feature>
<feature type="transmembrane region" description="Helical" evidence="1">
    <location>
        <begin position="9"/>
        <end position="29"/>
    </location>
</feature>
<protein>
    <recommendedName>
        <fullName evidence="1">ATP synthase subunit b</fullName>
    </recommendedName>
    <alternativeName>
        <fullName evidence="1">ATP synthase F(0) sector subunit b</fullName>
    </alternativeName>
    <alternativeName>
        <fullName evidence="1">ATPase subunit I</fullName>
    </alternativeName>
    <alternativeName>
        <fullName evidence="1">F-type ATPase subunit b</fullName>
        <shortName evidence="1">F-ATPase subunit b</shortName>
    </alternativeName>
</protein>
<evidence type="ECO:0000255" key="1">
    <source>
        <dbReference type="HAMAP-Rule" id="MF_01398"/>
    </source>
</evidence>
<sequence>MPTLLLGAAIPFGTIAYTLFIFLLLLVMLRKFAWGPLMGIMKEREEHVANEIDAAERNNAEAKKLVEEQREMLKQSRVEAQELIERAKKQAVDQKDVIVAAAKEEAESIKASAVQEIQREKEQAIAALQEQVASLSVQIASKVIEKELKEEDQVKLIRDYIKEVGEAR</sequence>
<proteinExistence type="inferred from homology"/>
<gene>
    <name evidence="1" type="primary">atpF</name>
    <name type="ordered locus">BT9727_4992</name>
</gene>